<reference key="1">
    <citation type="journal article" date="2014" name="Front. Plant Sci.">
        <title>Distinct phylogenetic relationships and biochemical properties of Arabidopsis ovarian tumor-related deubiquitinases support their functional differentiation.</title>
        <authorList>
            <person name="Radjacommare R."/>
            <person name="Usharani R."/>
            <person name="Kuo C.-H."/>
            <person name="Fu H."/>
        </authorList>
    </citation>
    <scope>NUCLEOTIDE SEQUENCE [MRNA]</scope>
    <scope>FUNCTION</scope>
    <scope>MUTAGENESIS OF ASP-89; CYS-92 AND HIS-288</scope>
    <scope>ACTIVITY REGULATION</scope>
    <scope>CATALYTIC ACTIVITY</scope>
    <scope>BIOPHYSICOCHEMICAL PROPERTIES</scope>
    <scope>GENE FAMILY</scope>
    <scope>NOMENCLATURE</scope>
</reference>
<reference key="2">
    <citation type="journal article" date="2000" name="Nature">
        <title>Sequence and analysis of chromosome 1 of the plant Arabidopsis thaliana.</title>
        <authorList>
            <person name="Theologis A."/>
            <person name="Ecker J.R."/>
            <person name="Palm C.J."/>
            <person name="Federspiel N.A."/>
            <person name="Kaul S."/>
            <person name="White O."/>
            <person name="Alonso J."/>
            <person name="Altafi H."/>
            <person name="Araujo R."/>
            <person name="Bowman C.L."/>
            <person name="Brooks S.Y."/>
            <person name="Buehler E."/>
            <person name="Chan A."/>
            <person name="Chao Q."/>
            <person name="Chen H."/>
            <person name="Cheuk R.F."/>
            <person name="Chin C.W."/>
            <person name="Chung M.K."/>
            <person name="Conn L."/>
            <person name="Conway A.B."/>
            <person name="Conway A.R."/>
            <person name="Creasy T.H."/>
            <person name="Dewar K."/>
            <person name="Dunn P."/>
            <person name="Etgu P."/>
            <person name="Feldblyum T.V."/>
            <person name="Feng J.-D."/>
            <person name="Fong B."/>
            <person name="Fujii C.Y."/>
            <person name="Gill J.E."/>
            <person name="Goldsmith A.D."/>
            <person name="Haas B."/>
            <person name="Hansen N.F."/>
            <person name="Hughes B."/>
            <person name="Huizar L."/>
            <person name="Hunter J.L."/>
            <person name="Jenkins J."/>
            <person name="Johnson-Hopson C."/>
            <person name="Khan S."/>
            <person name="Khaykin E."/>
            <person name="Kim C.J."/>
            <person name="Koo H.L."/>
            <person name="Kremenetskaia I."/>
            <person name="Kurtz D.B."/>
            <person name="Kwan A."/>
            <person name="Lam B."/>
            <person name="Langin-Hooper S."/>
            <person name="Lee A."/>
            <person name="Lee J.M."/>
            <person name="Lenz C.A."/>
            <person name="Li J.H."/>
            <person name="Li Y.-P."/>
            <person name="Lin X."/>
            <person name="Liu S.X."/>
            <person name="Liu Z.A."/>
            <person name="Luros J.S."/>
            <person name="Maiti R."/>
            <person name="Marziali A."/>
            <person name="Militscher J."/>
            <person name="Miranda M."/>
            <person name="Nguyen M."/>
            <person name="Nierman W.C."/>
            <person name="Osborne B.I."/>
            <person name="Pai G."/>
            <person name="Peterson J."/>
            <person name="Pham P.K."/>
            <person name="Rizzo M."/>
            <person name="Rooney T."/>
            <person name="Rowley D."/>
            <person name="Sakano H."/>
            <person name="Salzberg S.L."/>
            <person name="Schwartz J.R."/>
            <person name="Shinn P."/>
            <person name="Southwick A.M."/>
            <person name="Sun H."/>
            <person name="Tallon L.J."/>
            <person name="Tambunga G."/>
            <person name="Toriumi M.J."/>
            <person name="Town C.D."/>
            <person name="Utterback T."/>
            <person name="Van Aken S."/>
            <person name="Vaysberg M."/>
            <person name="Vysotskaia V.S."/>
            <person name="Walker M."/>
            <person name="Wu D."/>
            <person name="Yu G."/>
            <person name="Fraser C.M."/>
            <person name="Venter J.C."/>
            <person name="Davis R.W."/>
        </authorList>
    </citation>
    <scope>NUCLEOTIDE SEQUENCE [LARGE SCALE GENOMIC DNA]</scope>
    <source>
        <strain>cv. Columbia</strain>
    </source>
</reference>
<reference key="3">
    <citation type="journal article" date="2017" name="Plant J.">
        <title>Araport11: a complete reannotation of the Arabidopsis thaliana reference genome.</title>
        <authorList>
            <person name="Cheng C.Y."/>
            <person name="Krishnakumar V."/>
            <person name="Chan A.P."/>
            <person name="Thibaud-Nissen F."/>
            <person name="Schobel S."/>
            <person name="Town C.D."/>
        </authorList>
    </citation>
    <scope>GENOME REANNOTATION</scope>
    <source>
        <strain>cv. Columbia</strain>
    </source>
</reference>
<reference key="4">
    <citation type="journal article" date="2003" name="Science">
        <title>Empirical analysis of transcriptional activity in the Arabidopsis genome.</title>
        <authorList>
            <person name="Yamada K."/>
            <person name="Lim J."/>
            <person name="Dale J.M."/>
            <person name="Chen H."/>
            <person name="Shinn P."/>
            <person name="Palm C.J."/>
            <person name="Southwick A.M."/>
            <person name="Wu H.C."/>
            <person name="Kim C.J."/>
            <person name="Nguyen M."/>
            <person name="Pham P.K."/>
            <person name="Cheuk R.F."/>
            <person name="Karlin-Newmann G."/>
            <person name="Liu S.X."/>
            <person name="Lam B."/>
            <person name="Sakano H."/>
            <person name="Wu T."/>
            <person name="Yu G."/>
            <person name="Miranda M."/>
            <person name="Quach H.L."/>
            <person name="Tripp M."/>
            <person name="Chang C.H."/>
            <person name="Lee J.M."/>
            <person name="Toriumi M.J."/>
            <person name="Chan M.M."/>
            <person name="Tang C.C."/>
            <person name="Onodera C.S."/>
            <person name="Deng J.M."/>
            <person name="Akiyama K."/>
            <person name="Ansari Y."/>
            <person name="Arakawa T."/>
            <person name="Banh J."/>
            <person name="Banno F."/>
            <person name="Bowser L."/>
            <person name="Brooks S.Y."/>
            <person name="Carninci P."/>
            <person name="Chao Q."/>
            <person name="Choy N."/>
            <person name="Enju A."/>
            <person name="Goldsmith A.D."/>
            <person name="Gurjal M."/>
            <person name="Hansen N.F."/>
            <person name="Hayashizaki Y."/>
            <person name="Johnson-Hopson C."/>
            <person name="Hsuan V.W."/>
            <person name="Iida K."/>
            <person name="Karnes M."/>
            <person name="Khan S."/>
            <person name="Koesema E."/>
            <person name="Ishida J."/>
            <person name="Jiang P.X."/>
            <person name="Jones T."/>
            <person name="Kawai J."/>
            <person name="Kamiya A."/>
            <person name="Meyers C."/>
            <person name="Nakajima M."/>
            <person name="Narusaka M."/>
            <person name="Seki M."/>
            <person name="Sakurai T."/>
            <person name="Satou M."/>
            <person name="Tamse R."/>
            <person name="Vaysberg M."/>
            <person name="Wallender E.K."/>
            <person name="Wong C."/>
            <person name="Yamamura Y."/>
            <person name="Yuan S."/>
            <person name="Shinozaki K."/>
            <person name="Davis R.W."/>
            <person name="Theologis A."/>
            <person name="Ecker J.R."/>
        </authorList>
    </citation>
    <scope>NUCLEOTIDE SEQUENCE [LARGE SCALE MRNA]</scope>
    <source>
        <strain>cv. Columbia</strain>
    </source>
</reference>
<reference key="5">
    <citation type="submission" date="2002-03" db="EMBL/GenBank/DDBJ databases">
        <title>Full-length cDNA from Arabidopsis thaliana.</title>
        <authorList>
            <person name="Brover V.V."/>
            <person name="Troukhan M.E."/>
            <person name="Alexandrov N.A."/>
            <person name="Lu Y.-P."/>
            <person name="Flavell R.B."/>
            <person name="Feldmann K.A."/>
        </authorList>
    </citation>
    <scope>NUCLEOTIDE SEQUENCE [LARGE SCALE MRNA]</scope>
</reference>
<sequence length="306" mass="34434">MQNQIDMVKDEAEVAASISAIKGEEWGNCSSVEDQPSFQEEEAAKVPYVGDKEPLSSLAAEYQSGSPILLEKIKILDSQYIGIRRTRGDGNCFFRSFMFSYLEHILESQDRAEVDRIKVNVEKCRKTLQNLGYTDFTFEDFFALFLEQLDDILQGTEESISYDELVNRSRDQSVSDYIVMFFRFVTAGDIRTRADFFEPFITGLSNATVDQFCKSSVEPMGEESDHIHITALSDALGVAIRVVYLDRSSCDSGGVTVNHHDFVPVGITNEKDEEASAPFITLLYRPGHYDILYPKPSCKVSDNVGK</sequence>
<keyword id="KW-0378">Hydrolase</keyword>
<keyword id="KW-0645">Protease</keyword>
<keyword id="KW-1185">Reference proteome</keyword>
<keyword id="KW-0788">Thiol protease</keyword>
<keyword id="KW-0833">Ubl conjugation pathway</keyword>
<gene>
    <name evidence="5" type="primary">OTU1</name>
    <name type="ordered locus">At1g28120</name>
    <name type="ORF">F13K9.21</name>
</gene>
<accession>Q8LG98</accession>
<accession>K9M9G0</accession>
<accession>Q9C7E1</accession>
<proteinExistence type="evidence at protein level"/>
<organism>
    <name type="scientific">Arabidopsis thaliana</name>
    <name type="common">Mouse-ear cress</name>
    <dbReference type="NCBI Taxonomy" id="3702"/>
    <lineage>
        <taxon>Eukaryota</taxon>
        <taxon>Viridiplantae</taxon>
        <taxon>Streptophyta</taxon>
        <taxon>Embryophyta</taxon>
        <taxon>Tracheophyta</taxon>
        <taxon>Spermatophyta</taxon>
        <taxon>Magnoliopsida</taxon>
        <taxon>eudicotyledons</taxon>
        <taxon>Gunneridae</taxon>
        <taxon>Pentapetalae</taxon>
        <taxon>rosids</taxon>
        <taxon>malvids</taxon>
        <taxon>Brassicales</taxon>
        <taxon>Brassicaceae</taxon>
        <taxon>Camelineae</taxon>
        <taxon>Arabidopsis</taxon>
    </lineage>
</organism>
<evidence type="ECO:0000250" key="1">
    <source>
        <dbReference type="UniProtKB" id="Q96DC9"/>
    </source>
</evidence>
<evidence type="ECO:0000250" key="2">
    <source>
        <dbReference type="UniProtKB" id="Q96FW1"/>
    </source>
</evidence>
<evidence type="ECO:0000255" key="3">
    <source>
        <dbReference type="PROSITE-ProRule" id="PRU00139"/>
    </source>
</evidence>
<evidence type="ECO:0000269" key="4">
    <source>
    </source>
</evidence>
<evidence type="ECO:0000303" key="5">
    <source>
    </source>
</evidence>
<evidence type="ECO:0000305" key="6"/>
<protein>
    <recommendedName>
        <fullName evidence="5">OVARIAN TUMOR DOMAIN-containing deubiquitinating enzyme 1</fullName>
        <shortName evidence="5">OTU domain-containing protein 1</shortName>
        <ecNumber evidence="4">3.4.19.12</ecNumber>
    </recommendedName>
    <alternativeName>
        <fullName evidence="5">Deubiquitinating enzyme OTU1</fullName>
    </alternativeName>
</protein>
<feature type="chain" id="PRO_0000221014" description="OVARIAN TUMOR DOMAIN-containing deubiquitinating enzyme 1">
    <location>
        <begin position="1"/>
        <end position="306"/>
    </location>
</feature>
<feature type="domain" description="OTU" evidence="3">
    <location>
        <begin position="81"/>
        <end position="295"/>
    </location>
</feature>
<feature type="active site" evidence="1">
    <location>
        <position position="89"/>
    </location>
</feature>
<feature type="active site" description="Nucleophile" evidence="1">
    <location>
        <position position="92"/>
    </location>
</feature>
<feature type="active site" evidence="2">
    <location>
        <position position="259"/>
    </location>
</feature>
<feature type="active site" evidence="1">
    <location>
        <position position="288"/>
    </location>
</feature>
<feature type="mutagenesis site" description="Abolished cleavage activities for 'Lys-48'- and 'Lys-63'-linked ubiquitin (UB) tetramers and of linear UB polymer." evidence="4">
    <original>D</original>
    <variation>E</variation>
    <location>
        <position position="89"/>
    </location>
</feature>
<feature type="mutagenesis site" description="Abolished cleavage activities for 'Lys-48'- and 'Lys-63'-linked ubiquitin (UB) tetramers and of linear UB polymer." evidence="4">
    <original>C</original>
    <variation>S</variation>
    <location>
        <position position="92"/>
    </location>
</feature>
<feature type="mutagenesis site" description="Abolished cleavage activities for 'Lys-48'- and 'Lys-63'-linked ubiquitin (UB) tetramers and of linear UB polymer." evidence="4">
    <original>H</original>
    <variation>R</variation>
    <location>
        <position position="288"/>
    </location>
</feature>
<feature type="sequence conflict" description="In Ref. 5; AAM60966." evidence="6" ref="5">
    <original>I</original>
    <variation>N</variation>
    <location>
        <position position="5"/>
    </location>
</feature>
<comment type="function">
    <text evidence="4">Hydrolase that can remove conjugated ubiquitin from proteins in vitro and may therefore play an important regulatory role at the level of protein turnover by preventing degradation (PubMed:24659992). Cysteine protease with a preference for Met-1 and 'Lys-48' over 'Lys-63'-linked ubiquitin (UB) tetramers (e.g. Ub2, Ub3 and Ub4) as substrates (PubMed:24659992).</text>
</comment>
<comment type="catalytic activity">
    <reaction evidence="4">
        <text>Thiol-dependent hydrolysis of ester, thioester, amide, peptide and isopeptide bonds formed by the C-terminal Gly of ubiquitin (a 76-residue protein attached to proteins as an intracellular targeting signal).</text>
        <dbReference type="EC" id="3.4.19.12"/>
    </reaction>
</comment>
<comment type="activity regulation">
    <text evidence="4">Cleavage activities for 'Lys-48'- and 'Lys-63'-linked ubiquitin (UB) tetramers is inhibited by UB aldehyde and N-ethylmaleimide but not by the metalloprotease inhibitors 1,10-phenanthroline and EDTA, and the serine protease inhibitor phenylmethylsulfonyl fluoride.</text>
</comment>
<comment type="biophysicochemical properties">
    <phDependence>
        <text evidence="4">Optimum pH is 7.</text>
    </phDependence>
</comment>
<comment type="similarity">
    <text evidence="6">Belongs to the peptidase C65 family.</text>
</comment>
<dbReference type="EC" id="3.4.19.12" evidence="4"/>
<dbReference type="EMBL" id="JQ013442">
    <property type="protein sequence ID" value="AFS88945.1"/>
    <property type="molecule type" value="mRNA"/>
</dbReference>
<dbReference type="EMBL" id="AC069471">
    <property type="protein sequence ID" value="AAG51478.1"/>
    <property type="molecule type" value="Genomic_DNA"/>
</dbReference>
<dbReference type="EMBL" id="CP002684">
    <property type="protein sequence ID" value="AEE30920.1"/>
    <property type="molecule type" value="Genomic_DNA"/>
</dbReference>
<dbReference type="EMBL" id="AY136373">
    <property type="protein sequence ID" value="AAM97039.1"/>
    <property type="molecule type" value="mRNA"/>
</dbReference>
<dbReference type="EMBL" id="BT000164">
    <property type="protein sequence ID" value="AAN15483.1"/>
    <property type="molecule type" value="mRNA"/>
</dbReference>
<dbReference type="EMBL" id="AY084389">
    <property type="protein sequence ID" value="AAM60966.1"/>
    <property type="molecule type" value="mRNA"/>
</dbReference>
<dbReference type="PIR" id="A86407">
    <property type="entry name" value="A86407"/>
</dbReference>
<dbReference type="RefSeq" id="NP_564299.1">
    <property type="nucleotide sequence ID" value="NM_102577.4"/>
</dbReference>
<dbReference type="SMR" id="Q8LG98"/>
<dbReference type="BioGRID" id="24940">
    <property type="interactions" value="4"/>
</dbReference>
<dbReference type="FunCoup" id="Q8LG98">
    <property type="interactions" value="4253"/>
</dbReference>
<dbReference type="IntAct" id="Q8LG98">
    <property type="interactions" value="2"/>
</dbReference>
<dbReference type="STRING" id="3702.Q8LG98"/>
<dbReference type="MEROPS" id="C65.001"/>
<dbReference type="GlyGen" id="Q8LG98">
    <property type="glycosylation" value="1 site"/>
</dbReference>
<dbReference type="PaxDb" id="3702-AT1G28120.1"/>
<dbReference type="ProteomicsDB" id="226044"/>
<dbReference type="EnsemblPlants" id="AT1G28120.1">
    <property type="protein sequence ID" value="AT1G28120.1"/>
    <property type="gene ID" value="AT1G28120"/>
</dbReference>
<dbReference type="GeneID" id="839705"/>
<dbReference type="Gramene" id="AT1G28120.1">
    <property type="protein sequence ID" value="AT1G28120.1"/>
    <property type="gene ID" value="AT1G28120"/>
</dbReference>
<dbReference type="KEGG" id="ath:AT1G28120"/>
<dbReference type="Araport" id="AT1G28120"/>
<dbReference type="TAIR" id="AT1G28120">
    <property type="gene designation" value="OTU1"/>
</dbReference>
<dbReference type="eggNOG" id="KOG3991">
    <property type="taxonomic scope" value="Eukaryota"/>
</dbReference>
<dbReference type="HOGENOM" id="CLU_014832_3_0_1"/>
<dbReference type="InParanoid" id="Q8LG98"/>
<dbReference type="OMA" id="ADHVQIT"/>
<dbReference type="PhylomeDB" id="Q8LG98"/>
<dbReference type="PRO" id="PR:Q8LG98"/>
<dbReference type="Proteomes" id="UP000006548">
    <property type="component" value="Chromosome 1"/>
</dbReference>
<dbReference type="ExpressionAtlas" id="Q8LG98">
    <property type="expression patterns" value="baseline and differential"/>
</dbReference>
<dbReference type="GO" id="GO:0004843">
    <property type="term" value="F:cysteine-type deubiquitinase activity"/>
    <property type="evidence" value="ECO:0000314"/>
    <property type="project" value="TAIR"/>
</dbReference>
<dbReference type="GO" id="GO:1990380">
    <property type="term" value="F:K48-linked deubiquitinase activity"/>
    <property type="evidence" value="ECO:0000314"/>
    <property type="project" value="TAIR"/>
</dbReference>
<dbReference type="GO" id="GO:0061815">
    <property type="term" value="F:Met1-linked polyubiquitin deubiquitinase activity"/>
    <property type="evidence" value="ECO:0000314"/>
    <property type="project" value="TAIR"/>
</dbReference>
<dbReference type="GO" id="GO:0071108">
    <property type="term" value="P:protein K48-linked deubiquitination"/>
    <property type="evidence" value="ECO:0000314"/>
    <property type="project" value="TAIR"/>
</dbReference>
<dbReference type="GO" id="GO:0006508">
    <property type="term" value="P:proteolysis"/>
    <property type="evidence" value="ECO:0007669"/>
    <property type="project" value="UniProtKB-KW"/>
</dbReference>
<dbReference type="CDD" id="cd22765">
    <property type="entry name" value="AtOTU1-like"/>
    <property type="match status" value="1"/>
</dbReference>
<dbReference type="FunFam" id="1.20.1300.20:FF:000001">
    <property type="entry name" value="Ubiquitin thioesterase OTUB1"/>
    <property type="match status" value="1"/>
</dbReference>
<dbReference type="Gene3D" id="3.30.200.60">
    <property type="entry name" value="Peptidase C65 Otubain, subdomain 1"/>
    <property type="match status" value="1"/>
</dbReference>
<dbReference type="Gene3D" id="1.20.1300.20">
    <property type="entry name" value="Peptidase C65 Otubain, subdomain 2"/>
    <property type="match status" value="1"/>
</dbReference>
<dbReference type="InterPro" id="IPR003323">
    <property type="entry name" value="OTU_dom"/>
</dbReference>
<dbReference type="InterPro" id="IPR016615">
    <property type="entry name" value="Otubain"/>
</dbReference>
<dbReference type="InterPro" id="IPR038765">
    <property type="entry name" value="Papain-like_cys_pep_sf"/>
</dbReference>
<dbReference type="InterPro" id="IPR019400">
    <property type="entry name" value="Peptidase_C65_otubain"/>
</dbReference>
<dbReference type="InterPro" id="IPR042468">
    <property type="entry name" value="Peptidase_C65_otubain_sub1"/>
</dbReference>
<dbReference type="InterPro" id="IPR042467">
    <property type="entry name" value="Peptidase_C65_otubain_sub2"/>
</dbReference>
<dbReference type="PANTHER" id="PTHR12931:SF15">
    <property type="entry name" value="UBIQUITIN THIOESTERASE OTUBAIN-LIKE"/>
    <property type="match status" value="1"/>
</dbReference>
<dbReference type="PANTHER" id="PTHR12931">
    <property type="entry name" value="UBIQUITIN THIOLESTERASE PROTEIN OTUB"/>
    <property type="match status" value="1"/>
</dbReference>
<dbReference type="Pfam" id="PF10275">
    <property type="entry name" value="Peptidase_C65"/>
    <property type="match status" value="1"/>
</dbReference>
<dbReference type="PIRSF" id="PIRSF013503">
    <property type="entry name" value="Ubiquitin_thioesterase_Otubain"/>
    <property type="match status" value="1"/>
</dbReference>
<dbReference type="SUPFAM" id="SSF54001">
    <property type="entry name" value="Cysteine proteinases"/>
    <property type="match status" value="1"/>
</dbReference>
<dbReference type="PROSITE" id="PS50802">
    <property type="entry name" value="OTU"/>
    <property type="match status" value="1"/>
</dbReference>
<name>OTU1_ARATH</name>